<comment type="function">
    <text evidence="1">One of the primary rRNA binding proteins, it binds directly to 16S rRNA where it helps nucleate assembly of the platform of the 30S subunit by binding and bridging several RNA helices of the 16S rRNA.</text>
</comment>
<comment type="function">
    <text evidence="1">Forms an intersubunit bridge (bridge B4) with the 23S rRNA of the 50S subunit in the ribosome.</text>
</comment>
<comment type="subunit">
    <text evidence="1">Part of the 30S ribosomal subunit. Forms a bridge to the 50S subunit in the 70S ribosome, contacting the 23S rRNA.</text>
</comment>
<comment type="similarity">
    <text evidence="1">Belongs to the universal ribosomal protein uS15 family.</text>
</comment>
<feature type="chain" id="PRO_1000054848" description="Small ribosomal subunit protein uS15">
    <location>
        <begin position="1"/>
        <end position="89"/>
    </location>
</feature>
<proteinExistence type="inferred from homology"/>
<organism>
    <name type="scientific">Pseudomonas putida (strain ATCC 700007 / DSM 6899 / JCM 31910 / BCRC 17059 / LMG 24140 / F1)</name>
    <dbReference type="NCBI Taxonomy" id="351746"/>
    <lineage>
        <taxon>Bacteria</taxon>
        <taxon>Pseudomonadati</taxon>
        <taxon>Pseudomonadota</taxon>
        <taxon>Gammaproteobacteria</taxon>
        <taxon>Pseudomonadales</taxon>
        <taxon>Pseudomonadaceae</taxon>
        <taxon>Pseudomonas</taxon>
    </lineage>
</organism>
<evidence type="ECO:0000255" key="1">
    <source>
        <dbReference type="HAMAP-Rule" id="MF_01343"/>
    </source>
</evidence>
<evidence type="ECO:0000305" key="2"/>
<dbReference type="EMBL" id="CP000712">
    <property type="protein sequence ID" value="ABQ80694.1"/>
    <property type="molecule type" value="Genomic_DNA"/>
</dbReference>
<dbReference type="SMR" id="A5W984"/>
<dbReference type="KEGG" id="ppf:Pput_4574"/>
<dbReference type="eggNOG" id="COG0184">
    <property type="taxonomic scope" value="Bacteria"/>
</dbReference>
<dbReference type="HOGENOM" id="CLU_148518_0_0_6"/>
<dbReference type="GO" id="GO:0022627">
    <property type="term" value="C:cytosolic small ribosomal subunit"/>
    <property type="evidence" value="ECO:0007669"/>
    <property type="project" value="TreeGrafter"/>
</dbReference>
<dbReference type="GO" id="GO:0019843">
    <property type="term" value="F:rRNA binding"/>
    <property type="evidence" value="ECO:0007669"/>
    <property type="project" value="UniProtKB-UniRule"/>
</dbReference>
<dbReference type="GO" id="GO:0003735">
    <property type="term" value="F:structural constituent of ribosome"/>
    <property type="evidence" value="ECO:0007669"/>
    <property type="project" value="InterPro"/>
</dbReference>
<dbReference type="GO" id="GO:0006412">
    <property type="term" value="P:translation"/>
    <property type="evidence" value="ECO:0007669"/>
    <property type="project" value="UniProtKB-UniRule"/>
</dbReference>
<dbReference type="CDD" id="cd00353">
    <property type="entry name" value="Ribosomal_S15p_S13e"/>
    <property type="match status" value="1"/>
</dbReference>
<dbReference type="FunFam" id="1.10.287.10:FF:000002">
    <property type="entry name" value="30S ribosomal protein S15"/>
    <property type="match status" value="1"/>
</dbReference>
<dbReference type="Gene3D" id="6.10.250.3130">
    <property type="match status" value="1"/>
</dbReference>
<dbReference type="Gene3D" id="1.10.287.10">
    <property type="entry name" value="S15/NS1, RNA-binding"/>
    <property type="match status" value="1"/>
</dbReference>
<dbReference type="HAMAP" id="MF_01343_B">
    <property type="entry name" value="Ribosomal_uS15_B"/>
    <property type="match status" value="1"/>
</dbReference>
<dbReference type="InterPro" id="IPR000589">
    <property type="entry name" value="Ribosomal_uS15"/>
</dbReference>
<dbReference type="InterPro" id="IPR005290">
    <property type="entry name" value="Ribosomal_uS15_bac-type"/>
</dbReference>
<dbReference type="InterPro" id="IPR009068">
    <property type="entry name" value="uS15_NS1_RNA-bd_sf"/>
</dbReference>
<dbReference type="NCBIfam" id="TIGR00952">
    <property type="entry name" value="S15_bact"/>
    <property type="match status" value="1"/>
</dbReference>
<dbReference type="PANTHER" id="PTHR23321">
    <property type="entry name" value="RIBOSOMAL PROTEIN S15, BACTERIAL AND ORGANELLAR"/>
    <property type="match status" value="1"/>
</dbReference>
<dbReference type="PANTHER" id="PTHR23321:SF26">
    <property type="entry name" value="SMALL RIBOSOMAL SUBUNIT PROTEIN US15M"/>
    <property type="match status" value="1"/>
</dbReference>
<dbReference type="Pfam" id="PF00312">
    <property type="entry name" value="Ribosomal_S15"/>
    <property type="match status" value="1"/>
</dbReference>
<dbReference type="SMART" id="SM01387">
    <property type="entry name" value="Ribosomal_S15"/>
    <property type="match status" value="1"/>
</dbReference>
<dbReference type="SUPFAM" id="SSF47060">
    <property type="entry name" value="S15/NS1 RNA-binding domain"/>
    <property type="match status" value="1"/>
</dbReference>
<dbReference type="PROSITE" id="PS00362">
    <property type="entry name" value="RIBOSOMAL_S15"/>
    <property type="match status" value="1"/>
</dbReference>
<reference key="1">
    <citation type="submission" date="2007-05" db="EMBL/GenBank/DDBJ databases">
        <title>Complete sequence of Pseudomonas putida F1.</title>
        <authorList>
            <consortium name="US DOE Joint Genome Institute"/>
            <person name="Copeland A."/>
            <person name="Lucas S."/>
            <person name="Lapidus A."/>
            <person name="Barry K."/>
            <person name="Detter J.C."/>
            <person name="Glavina del Rio T."/>
            <person name="Hammon N."/>
            <person name="Israni S."/>
            <person name="Dalin E."/>
            <person name="Tice H."/>
            <person name="Pitluck S."/>
            <person name="Chain P."/>
            <person name="Malfatti S."/>
            <person name="Shin M."/>
            <person name="Vergez L."/>
            <person name="Schmutz J."/>
            <person name="Larimer F."/>
            <person name="Land M."/>
            <person name="Hauser L."/>
            <person name="Kyrpides N."/>
            <person name="Lykidis A."/>
            <person name="Parales R."/>
            <person name="Richardson P."/>
        </authorList>
    </citation>
    <scope>NUCLEOTIDE SEQUENCE [LARGE SCALE GENOMIC DNA]</scope>
    <source>
        <strain>ATCC 700007 / DSM 6899 / JCM 31910 / BCRC 17059 / LMG 24140 / F1</strain>
    </source>
</reference>
<gene>
    <name evidence="1" type="primary">rpsO</name>
    <name type="ordered locus">Pput_4574</name>
</gene>
<name>RS15_PSEP1</name>
<accession>A5W984</accession>
<protein>
    <recommendedName>
        <fullName evidence="1">Small ribosomal subunit protein uS15</fullName>
    </recommendedName>
    <alternativeName>
        <fullName evidence="2">30S ribosomal protein S15</fullName>
    </alternativeName>
</protein>
<keyword id="KW-0687">Ribonucleoprotein</keyword>
<keyword id="KW-0689">Ribosomal protein</keyword>
<keyword id="KW-0694">RNA-binding</keyword>
<keyword id="KW-0699">rRNA-binding</keyword>
<sequence length="89" mass="10031">MALSVEEKAQIVAEYQQAAGDTGSPEVQVALLTANINKLQGHFKANDKDHHSRRGLIRMVNQRRKLLDYLKGKDTTRYSALIGRLGLRR</sequence>